<keyword id="KW-0687">Ribonucleoprotein</keyword>
<keyword id="KW-0689">Ribosomal protein</keyword>
<keyword id="KW-0694">RNA-binding</keyword>
<keyword id="KW-0699">rRNA-binding</keyword>
<gene>
    <name evidence="1" type="primary">rpsR</name>
    <name type="ordered locus">Mmcs_5368</name>
</gene>
<sequence>MAKSNKRRPAPEKPVKTRKCVFCSKKGQDIDYKDTALLRTYISERGKIRARRVTGNCVQHQRDIAVAVKNAREVALLPFGSSTR</sequence>
<organism>
    <name type="scientific">Mycobacterium sp. (strain MCS)</name>
    <dbReference type="NCBI Taxonomy" id="164756"/>
    <lineage>
        <taxon>Bacteria</taxon>
        <taxon>Bacillati</taxon>
        <taxon>Actinomycetota</taxon>
        <taxon>Actinomycetes</taxon>
        <taxon>Mycobacteriales</taxon>
        <taxon>Mycobacteriaceae</taxon>
        <taxon>Mycobacterium</taxon>
    </lineage>
</organism>
<evidence type="ECO:0000255" key="1">
    <source>
        <dbReference type="HAMAP-Rule" id="MF_00270"/>
    </source>
</evidence>
<evidence type="ECO:0000305" key="2"/>
<reference key="1">
    <citation type="submission" date="2006-06" db="EMBL/GenBank/DDBJ databases">
        <title>Complete sequence of chromosome of Mycobacterium sp. MCS.</title>
        <authorList>
            <consortium name="US DOE Joint Genome Institute"/>
            <person name="Copeland A."/>
            <person name="Lucas S."/>
            <person name="Lapidus A."/>
            <person name="Barry K."/>
            <person name="Detter J.C."/>
            <person name="Glavina del Rio T."/>
            <person name="Hammon N."/>
            <person name="Israni S."/>
            <person name="Dalin E."/>
            <person name="Tice H."/>
            <person name="Pitluck S."/>
            <person name="Martinez M."/>
            <person name="Schmutz J."/>
            <person name="Larimer F."/>
            <person name="Land M."/>
            <person name="Hauser L."/>
            <person name="Kyrpides N."/>
            <person name="Kim E."/>
            <person name="Miller C.D."/>
            <person name="Hughes J.E."/>
            <person name="Anderson A.J."/>
            <person name="Sims R.C."/>
            <person name="Richardson P."/>
        </authorList>
    </citation>
    <scope>NUCLEOTIDE SEQUENCE [LARGE SCALE GENOMIC DNA]</scope>
    <source>
        <strain>MCS</strain>
    </source>
</reference>
<protein>
    <recommendedName>
        <fullName evidence="1">Small ribosomal subunit protein bS18</fullName>
    </recommendedName>
    <alternativeName>
        <fullName evidence="2">30S ribosomal protein S18</fullName>
    </alternativeName>
</protein>
<accession>Q1B0W6</accession>
<proteinExistence type="inferred from homology"/>
<dbReference type="EMBL" id="CP000384">
    <property type="protein sequence ID" value="ABG11468.1"/>
    <property type="molecule type" value="Genomic_DNA"/>
</dbReference>
<dbReference type="SMR" id="Q1B0W6"/>
<dbReference type="KEGG" id="mmc:Mmcs_5368"/>
<dbReference type="HOGENOM" id="CLU_148710_2_2_11"/>
<dbReference type="BioCyc" id="MSP164756:G1G6O-5480-MONOMER"/>
<dbReference type="GO" id="GO:0022627">
    <property type="term" value="C:cytosolic small ribosomal subunit"/>
    <property type="evidence" value="ECO:0007669"/>
    <property type="project" value="TreeGrafter"/>
</dbReference>
<dbReference type="GO" id="GO:0070181">
    <property type="term" value="F:small ribosomal subunit rRNA binding"/>
    <property type="evidence" value="ECO:0007669"/>
    <property type="project" value="TreeGrafter"/>
</dbReference>
<dbReference type="GO" id="GO:0003735">
    <property type="term" value="F:structural constituent of ribosome"/>
    <property type="evidence" value="ECO:0007669"/>
    <property type="project" value="InterPro"/>
</dbReference>
<dbReference type="GO" id="GO:0006412">
    <property type="term" value="P:translation"/>
    <property type="evidence" value="ECO:0007669"/>
    <property type="project" value="UniProtKB-UniRule"/>
</dbReference>
<dbReference type="FunFam" id="4.10.640.10:FF:000004">
    <property type="entry name" value="30S ribosomal protein S18"/>
    <property type="match status" value="1"/>
</dbReference>
<dbReference type="Gene3D" id="4.10.640.10">
    <property type="entry name" value="Ribosomal protein S18"/>
    <property type="match status" value="1"/>
</dbReference>
<dbReference type="HAMAP" id="MF_00270">
    <property type="entry name" value="Ribosomal_bS18"/>
    <property type="match status" value="1"/>
</dbReference>
<dbReference type="InterPro" id="IPR001648">
    <property type="entry name" value="Ribosomal_bS18"/>
</dbReference>
<dbReference type="InterPro" id="IPR018275">
    <property type="entry name" value="Ribosomal_bS18_CS"/>
</dbReference>
<dbReference type="InterPro" id="IPR036870">
    <property type="entry name" value="Ribosomal_bS18_sf"/>
</dbReference>
<dbReference type="NCBIfam" id="TIGR00165">
    <property type="entry name" value="S18"/>
    <property type="match status" value="1"/>
</dbReference>
<dbReference type="PANTHER" id="PTHR13479">
    <property type="entry name" value="30S RIBOSOMAL PROTEIN S18"/>
    <property type="match status" value="1"/>
</dbReference>
<dbReference type="PANTHER" id="PTHR13479:SF62">
    <property type="entry name" value="SMALL RIBOSOMAL SUBUNIT PROTEIN BS18A"/>
    <property type="match status" value="1"/>
</dbReference>
<dbReference type="Pfam" id="PF01084">
    <property type="entry name" value="Ribosomal_S18"/>
    <property type="match status" value="1"/>
</dbReference>
<dbReference type="PRINTS" id="PR00974">
    <property type="entry name" value="RIBOSOMALS18"/>
</dbReference>
<dbReference type="SUPFAM" id="SSF46911">
    <property type="entry name" value="Ribosomal protein S18"/>
    <property type="match status" value="1"/>
</dbReference>
<dbReference type="PROSITE" id="PS00057">
    <property type="entry name" value="RIBOSOMAL_S18"/>
    <property type="match status" value="1"/>
</dbReference>
<name>RS18_MYCSS</name>
<comment type="function">
    <text evidence="1">Binds as a heterodimer with protein bS6 to the central domain of the 16S rRNA, where it helps stabilize the platform of the 30S subunit.</text>
</comment>
<comment type="subunit">
    <text evidence="1">Part of the 30S ribosomal subunit. Forms a tight heterodimer with protein bS6.</text>
</comment>
<comment type="similarity">
    <text evidence="1">Belongs to the bacterial ribosomal protein bS18 family.</text>
</comment>
<feature type="chain" id="PRO_1000003542" description="Small ribosomal subunit protein bS18">
    <location>
        <begin position="1"/>
        <end position="84"/>
    </location>
</feature>